<evidence type="ECO:0000250" key="1">
    <source>
        <dbReference type="UniProtKB" id="Q03149"/>
    </source>
</evidence>
<evidence type="ECO:0000250" key="2">
    <source>
        <dbReference type="UniProtKB" id="Q5B0D0"/>
    </source>
</evidence>
<evidence type="ECO:0000255" key="3"/>
<evidence type="ECO:0000255" key="4">
    <source>
        <dbReference type="PROSITE-ProRule" id="PRU00258"/>
    </source>
</evidence>
<evidence type="ECO:0000255" key="5">
    <source>
        <dbReference type="PROSITE-ProRule" id="PRU01348"/>
    </source>
</evidence>
<evidence type="ECO:0000255" key="6">
    <source>
        <dbReference type="PROSITE-ProRule" id="PRU01363"/>
    </source>
</evidence>
<evidence type="ECO:0000255" key="7">
    <source>
        <dbReference type="PROSITE-ProRule" id="PRU10022"/>
    </source>
</evidence>
<evidence type="ECO:0000256" key="8">
    <source>
        <dbReference type="SAM" id="MobiDB-lite"/>
    </source>
</evidence>
<evidence type="ECO:0000269" key="9">
    <source>
    </source>
</evidence>
<evidence type="ECO:0000303" key="10">
    <source>
    </source>
</evidence>
<evidence type="ECO:0000305" key="11">
    <source>
    </source>
</evidence>
<organism>
    <name type="scientific">Aspergillus niger (strain ATCC 1015 / CBS 113.46 / FGSC A1144 / LSHB Ac4 / NCTC 3858a / NRRL 328 / USDA 3528.7)</name>
    <dbReference type="NCBI Taxonomy" id="380704"/>
    <lineage>
        <taxon>Eukaryota</taxon>
        <taxon>Fungi</taxon>
        <taxon>Dikarya</taxon>
        <taxon>Ascomycota</taxon>
        <taxon>Pezizomycotina</taxon>
        <taxon>Eurotiomycetes</taxon>
        <taxon>Eurotiomycetidae</taxon>
        <taxon>Eurotiales</taxon>
        <taxon>Aspergillaceae</taxon>
        <taxon>Aspergillus</taxon>
        <taxon>Aspergillus subgen. Circumdati</taxon>
    </lineage>
</organism>
<proteinExistence type="inferred from homology"/>
<comment type="function">
    <text evidence="9 11">Non-reducing polyketide synthase; part of the gene cluster that mediates the biosynthesis of aurasperone B, a dimeric gamma-naphthopyrone (PubMed:31067027). The first step in the biosynthesis of aurasperone B is the production of gamma-naphthopyrone precursor YWA1 by the non-reducing polyketide synthase albA, via condensation of one acetyl-CoA starter unit with 6 malonyl-CoA units (PubMed:31067027). YWA1 is then methylated by aunE at position C-6 to yield foncesin which is further methylated at position C-8 by aunD to produce fonsecin B (Probable). A key enzyme in the biosynthetic pathway is the cytochrome P450 monooxygenase aunB which catalyzes the oxidative dimerization of fonsecin B to aurasperone B (PubMed:31067027). AunB also catalyzes the oxidative dimerization of rubrofusarin B into aurasperone A (PubMed:31067027).</text>
</comment>
<comment type="catalytic activity">
    <reaction evidence="11">
        <text>6 malonyl-CoA + acetyl-CoA + 6 H(+) = naphtopyrone YWA1 + 6 CO2 + 7 CoA + H2O</text>
        <dbReference type="Rhea" id="RHEA:62652"/>
        <dbReference type="ChEBI" id="CHEBI:15377"/>
        <dbReference type="ChEBI" id="CHEBI:15378"/>
        <dbReference type="ChEBI" id="CHEBI:16526"/>
        <dbReference type="ChEBI" id="CHEBI:57287"/>
        <dbReference type="ChEBI" id="CHEBI:57288"/>
        <dbReference type="ChEBI" id="CHEBI:57384"/>
        <dbReference type="ChEBI" id="CHEBI:133763"/>
    </reaction>
    <physiologicalReaction direction="left-to-right" evidence="11">
        <dbReference type="Rhea" id="RHEA:62653"/>
    </physiologicalReaction>
</comment>
<comment type="pathway">
    <text evidence="11">Secondary metabolite biosynthesis.</text>
</comment>
<comment type="domain">
    <text evidence="2">Multidomain protein; including a starter unit:ACP transacylase (SAT) that selects the starter unit; a ketosynthase (KS) that catalyzes repeated decarboxylative condensation to elongate the polyketide backbone; a malonyl-CoA:ACP transacylase (MAT) that selects and transfers the extender unit malonyl-CoA; a product template (PT) domain that controls the immediate cyclization regioselectivity of the reactive polyketide backbone; and 2 acyl-carrier protein (ACP) domains that serve as the tethers of the growing and completed polyketide via their phosphopantetheinyl arm.</text>
</comment>
<comment type="domain">
    <text evidence="1">The C-terminal region is involved in Claisen-type cyclization of the second ring of naphthopyrone.</text>
</comment>
<feature type="chain" id="PRO_0000449883" description="Non-reducing polyketide synthase albA">
    <location>
        <begin position="1"/>
        <end position="2128"/>
    </location>
</feature>
<feature type="domain" description="Ketosynthase family 3 (KS3)" evidence="5">
    <location>
        <begin position="375"/>
        <end position="806"/>
    </location>
</feature>
<feature type="domain" description="PKS/mFAS DH" evidence="6">
    <location>
        <begin position="1286"/>
        <end position="1598"/>
    </location>
</feature>
<feature type="domain" description="Carrier 1" evidence="4">
    <location>
        <begin position="1618"/>
        <end position="1695"/>
    </location>
</feature>
<feature type="domain" description="Carrier 2" evidence="4">
    <location>
        <begin position="1739"/>
        <end position="1816"/>
    </location>
</feature>
<feature type="region of interest" description="N-terminal acylcarrier protein transacylase domain (SAT)" evidence="3">
    <location>
        <begin position="8"/>
        <end position="244"/>
    </location>
</feature>
<feature type="region of interest" description="Malonyl-CoA:ACP transacylase (MAT) domain" evidence="3">
    <location>
        <begin position="912"/>
        <end position="1232"/>
    </location>
</feature>
<feature type="region of interest" description="N-terminal hotdog fold" evidence="6">
    <location>
        <begin position="1286"/>
        <end position="1425"/>
    </location>
</feature>
<feature type="region of interest" description="Product template (PT) domain" evidence="3">
    <location>
        <begin position="1290"/>
        <end position="1603"/>
    </location>
</feature>
<feature type="region of interest" description="C-terminal hotdog fold" evidence="6">
    <location>
        <begin position="1452"/>
        <end position="1598"/>
    </location>
</feature>
<feature type="region of interest" description="Disordered" evidence="8">
    <location>
        <begin position="1695"/>
        <end position="1740"/>
    </location>
</feature>
<feature type="region of interest" description="Claisen cyclase domain" evidence="1">
    <location>
        <begin position="1854"/>
        <end position="2126"/>
    </location>
</feature>
<feature type="compositionally biased region" description="Low complexity" evidence="8">
    <location>
        <begin position="1700"/>
        <end position="1723"/>
    </location>
</feature>
<feature type="compositionally biased region" description="Polar residues" evidence="8">
    <location>
        <begin position="1724"/>
        <end position="1740"/>
    </location>
</feature>
<feature type="active site" description="For beta-ketoacyl synthase activity" evidence="5">
    <location>
        <position position="547"/>
    </location>
</feature>
<feature type="active site" description="For beta-ketoacyl synthase activity" evidence="5">
    <location>
        <position position="682"/>
    </location>
</feature>
<feature type="active site" description="For beta-ketoacyl synthase activity" evidence="5">
    <location>
        <position position="724"/>
    </location>
</feature>
<feature type="active site" description="For acyl/malonyl transferase activity" evidence="7">
    <location>
        <position position="1001"/>
    </location>
</feature>
<feature type="active site" description="Proton acceptor; for dehydratase activity" evidence="6">
    <location>
        <position position="1326"/>
    </location>
</feature>
<feature type="active site" description="Proton donor; for dehydratase activity" evidence="6">
    <location>
        <position position="1511"/>
    </location>
</feature>
<feature type="active site" description="For Claisen cyclase activity" evidence="1">
    <location>
        <position position="1944"/>
    </location>
</feature>
<feature type="modified residue" description="O-(pantetheine 4'-phosphoryl)serine" evidence="4">
    <location>
        <position position="1655"/>
    </location>
</feature>
<feature type="modified residue" description="O-(pantetheine 4'-phosphoryl)serine" evidence="4">
    <location>
        <position position="1776"/>
    </location>
</feature>
<gene>
    <name evidence="10" type="primary">albA</name>
    <name type="ORF">ASPNIDRAFT_56896</name>
</gene>
<dbReference type="EC" id="2.3.1.-" evidence="11"/>
<dbReference type="EMBL" id="ACJE01000001">
    <property type="protein sequence ID" value="EHA28527.1"/>
    <property type="molecule type" value="Genomic_DNA"/>
</dbReference>
<dbReference type="SMR" id="G3XLL5"/>
<dbReference type="STRING" id="380704.G3XLL5"/>
<dbReference type="ESTHER" id="aspna-alba">
    <property type="family name" value="Thioesterase"/>
</dbReference>
<dbReference type="HOGENOM" id="CLU_000022_6_0_1"/>
<dbReference type="OrthoDB" id="61978at5052"/>
<dbReference type="Proteomes" id="UP000009038">
    <property type="component" value="Unassembled WGS sequence"/>
</dbReference>
<dbReference type="GO" id="GO:0004315">
    <property type="term" value="F:3-oxoacyl-[acyl-carrier-protein] synthase activity"/>
    <property type="evidence" value="ECO:0007669"/>
    <property type="project" value="InterPro"/>
</dbReference>
<dbReference type="GO" id="GO:0004312">
    <property type="term" value="F:fatty acid synthase activity"/>
    <property type="evidence" value="ECO:0007669"/>
    <property type="project" value="TreeGrafter"/>
</dbReference>
<dbReference type="GO" id="GO:0031177">
    <property type="term" value="F:phosphopantetheine binding"/>
    <property type="evidence" value="ECO:0007669"/>
    <property type="project" value="InterPro"/>
</dbReference>
<dbReference type="GO" id="GO:0006633">
    <property type="term" value="P:fatty acid biosynthetic process"/>
    <property type="evidence" value="ECO:0007669"/>
    <property type="project" value="InterPro"/>
</dbReference>
<dbReference type="CDD" id="cd00833">
    <property type="entry name" value="PKS"/>
    <property type="match status" value="1"/>
</dbReference>
<dbReference type="FunFam" id="3.40.366.10:FF:000011">
    <property type="entry name" value="Polyketide synthetase PksP"/>
    <property type="match status" value="1"/>
</dbReference>
<dbReference type="FunFam" id="3.40.366.10:FF:000002">
    <property type="entry name" value="Probable polyketide synthase 2"/>
    <property type="match status" value="1"/>
</dbReference>
<dbReference type="FunFam" id="1.10.1200.10:FF:000011">
    <property type="entry name" value="Sterigmatocystin biosynthesis polyketide synthase"/>
    <property type="match status" value="2"/>
</dbReference>
<dbReference type="FunFam" id="3.10.129.110:FF:000001">
    <property type="entry name" value="Sterigmatocystin biosynthesis polyketide synthase"/>
    <property type="match status" value="1"/>
</dbReference>
<dbReference type="FunFam" id="3.40.47.10:FF:000031">
    <property type="entry name" value="Sterigmatocystin biosynthesis polyketide synthase"/>
    <property type="match status" value="1"/>
</dbReference>
<dbReference type="FunFam" id="3.40.50.1820:FF:000116">
    <property type="entry name" value="Sterigmatocystin biosynthesis polyketide synthase"/>
    <property type="match status" value="1"/>
</dbReference>
<dbReference type="Gene3D" id="3.30.70.3290">
    <property type="match status" value="1"/>
</dbReference>
<dbReference type="Gene3D" id="3.40.47.10">
    <property type="match status" value="1"/>
</dbReference>
<dbReference type="Gene3D" id="1.10.1200.10">
    <property type="entry name" value="ACP-like"/>
    <property type="match status" value="2"/>
</dbReference>
<dbReference type="Gene3D" id="3.40.50.1820">
    <property type="entry name" value="alpha/beta hydrolase"/>
    <property type="match status" value="1"/>
</dbReference>
<dbReference type="Gene3D" id="3.40.366.10">
    <property type="entry name" value="Malonyl-Coenzyme A Acyl Carrier Protein, domain 2"/>
    <property type="match status" value="2"/>
</dbReference>
<dbReference type="Gene3D" id="3.10.129.110">
    <property type="entry name" value="Polyketide synthase dehydratase"/>
    <property type="match status" value="1"/>
</dbReference>
<dbReference type="InterPro" id="IPR029058">
    <property type="entry name" value="AB_hydrolase_fold"/>
</dbReference>
<dbReference type="InterPro" id="IPR001227">
    <property type="entry name" value="Ac_transferase_dom_sf"/>
</dbReference>
<dbReference type="InterPro" id="IPR036736">
    <property type="entry name" value="ACP-like_sf"/>
</dbReference>
<dbReference type="InterPro" id="IPR014043">
    <property type="entry name" value="Acyl_transferase_dom"/>
</dbReference>
<dbReference type="InterPro" id="IPR016035">
    <property type="entry name" value="Acyl_Trfase/lysoPLipase"/>
</dbReference>
<dbReference type="InterPro" id="IPR018201">
    <property type="entry name" value="Ketoacyl_synth_AS"/>
</dbReference>
<dbReference type="InterPro" id="IPR014031">
    <property type="entry name" value="Ketoacyl_synth_C"/>
</dbReference>
<dbReference type="InterPro" id="IPR014030">
    <property type="entry name" value="Ketoacyl_synth_N"/>
</dbReference>
<dbReference type="InterPro" id="IPR016036">
    <property type="entry name" value="Malonyl_transacylase_ACP-bd"/>
</dbReference>
<dbReference type="InterPro" id="IPR020841">
    <property type="entry name" value="PKS_Beta-ketoAc_synthase_dom"/>
</dbReference>
<dbReference type="InterPro" id="IPR042104">
    <property type="entry name" value="PKS_dehydratase_sf"/>
</dbReference>
<dbReference type="InterPro" id="IPR049900">
    <property type="entry name" value="PKS_mFAS_DH"/>
</dbReference>
<dbReference type="InterPro" id="IPR050091">
    <property type="entry name" value="PKS_NRPS_Biosynth_Enz"/>
</dbReference>
<dbReference type="InterPro" id="IPR020806">
    <property type="entry name" value="PKS_PP-bd"/>
</dbReference>
<dbReference type="InterPro" id="IPR009081">
    <property type="entry name" value="PP-bd_ACP"/>
</dbReference>
<dbReference type="InterPro" id="IPR006162">
    <property type="entry name" value="Ppantetheine_attach_site"/>
</dbReference>
<dbReference type="InterPro" id="IPR030918">
    <property type="entry name" value="PT_fungal_PKS"/>
</dbReference>
<dbReference type="InterPro" id="IPR032088">
    <property type="entry name" value="SAT"/>
</dbReference>
<dbReference type="InterPro" id="IPR001031">
    <property type="entry name" value="Thioesterase"/>
</dbReference>
<dbReference type="InterPro" id="IPR016039">
    <property type="entry name" value="Thiolase-like"/>
</dbReference>
<dbReference type="NCBIfam" id="TIGR04532">
    <property type="entry name" value="PT_fungal_PKS"/>
    <property type="match status" value="1"/>
</dbReference>
<dbReference type="PANTHER" id="PTHR43775">
    <property type="entry name" value="FATTY ACID SYNTHASE"/>
    <property type="match status" value="1"/>
</dbReference>
<dbReference type="PANTHER" id="PTHR43775:SF37">
    <property type="entry name" value="SI:DKEY-61P9.11"/>
    <property type="match status" value="1"/>
</dbReference>
<dbReference type="Pfam" id="PF00698">
    <property type="entry name" value="Acyl_transf_1"/>
    <property type="match status" value="1"/>
</dbReference>
<dbReference type="Pfam" id="PF00109">
    <property type="entry name" value="ketoacyl-synt"/>
    <property type="match status" value="1"/>
</dbReference>
<dbReference type="Pfam" id="PF02801">
    <property type="entry name" value="Ketoacyl-synt_C"/>
    <property type="match status" value="1"/>
</dbReference>
<dbReference type="Pfam" id="PF00550">
    <property type="entry name" value="PP-binding"/>
    <property type="match status" value="2"/>
</dbReference>
<dbReference type="Pfam" id="PF16073">
    <property type="entry name" value="SAT"/>
    <property type="match status" value="1"/>
</dbReference>
<dbReference type="Pfam" id="PF00975">
    <property type="entry name" value="Thioesterase"/>
    <property type="match status" value="1"/>
</dbReference>
<dbReference type="SMART" id="SM00827">
    <property type="entry name" value="PKS_AT"/>
    <property type="match status" value="1"/>
</dbReference>
<dbReference type="SMART" id="SM00825">
    <property type="entry name" value="PKS_KS"/>
    <property type="match status" value="1"/>
</dbReference>
<dbReference type="SMART" id="SM00823">
    <property type="entry name" value="PKS_PP"/>
    <property type="match status" value="2"/>
</dbReference>
<dbReference type="SUPFAM" id="SSF47336">
    <property type="entry name" value="ACP-like"/>
    <property type="match status" value="2"/>
</dbReference>
<dbReference type="SUPFAM" id="SSF53474">
    <property type="entry name" value="alpha/beta-Hydrolases"/>
    <property type="match status" value="1"/>
</dbReference>
<dbReference type="SUPFAM" id="SSF52151">
    <property type="entry name" value="FabD/lysophospholipase-like"/>
    <property type="match status" value="1"/>
</dbReference>
<dbReference type="SUPFAM" id="SSF55048">
    <property type="entry name" value="Probable ACP-binding domain of malonyl-CoA ACP transacylase"/>
    <property type="match status" value="1"/>
</dbReference>
<dbReference type="SUPFAM" id="SSF53901">
    <property type="entry name" value="Thiolase-like"/>
    <property type="match status" value="1"/>
</dbReference>
<dbReference type="PROSITE" id="PS50075">
    <property type="entry name" value="CARRIER"/>
    <property type="match status" value="2"/>
</dbReference>
<dbReference type="PROSITE" id="PS00606">
    <property type="entry name" value="KS3_1"/>
    <property type="match status" value="1"/>
</dbReference>
<dbReference type="PROSITE" id="PS52004">
    <property type="entry name" value="KS3_2"/>
    <property type="match status" value="1"/>
</dbReference>
<dbReference type="PROSITE" id="PS00012">
    <property type="entry name" value="PHOSPHOPANTETHEINE"/>
    <property type="match status" value="1"/>
</dbReference>
<dbReference type="PROSITE" id="PS52019">
    <property type="entry name" value="PKS_MFAS_DH"/>
    <property type="match status" value="1"/>
</dbReference>
<name>ALBA_ASPNA</name>
<sequence>MEGPSRVYLFGDQTSDIEAGLRRLLQAKNSTIVQSFFQQCFHAIRQEIAKLPPSHRKLFPRFTSIVDLLSRSRESGPSPVLESALTCIYQLGCFIHFYGDLGHDYPTPSNSHLVGLCTGVLSCTAVSCARNVGELIPAAVESVVIALRLGICVFRVRELVDSADSESTCWSALVSGISEAEASHLIDEYSSKKATPPSSKPYISAVSSNGVTVSAPPTVLDEFVETCISKNYKPVKAPIHGPYHAPHLYDDKDIDRILQQSSALEGLTGCSPVIPIISSNTGKPIKAKSIKDLFKVALEEILLRRLCWDKVTESCTSVCKTGTNHSCKLFPISSSATQSLFTVLKKAGVSISLETGVGEIATNPEMRNLTGKAENSKIAIIGMSGRFPDSDGTESFWNLLYKGLDVHRKVPADRWDVDAHVDMTGSKRNTSKVAYGCWINEPGLFDPRFFNMSPREALQADPAQRLALLTAYEALEMAGFIPDSSPSTQRDRVGIFYGMTSDDYREINSGQDIDTYFIPGGNRAFTPGRINYYFKFSGPSVSVDTACSSSLAAIHMACNSIWRNDCDAAITGGVNILTNPDNHAGLDRGHFLSTTGNCNTFDDGADGYCRADGVGSIVLKRLEDAEADNDPILAVINGAYTNHSAEAVSITRPHVGAQAFIFNKLLNDANIDPKDVSYVEMHGTGTQAGDAVEMQSVLDVFAPDYRRGPGQSLHIGSAKANIGHGESASGVTALVKVLLMMRENMIPPHCGIKTKINSNFPTDLAKRNVHIAFQPTPWNRPASGKRRTFVNNFSAAGGNTALLLEDAPIPERQGQDPRSFHLVSVSARSQSALKNNVEALVKYIDSQGKSFGVKETEFLPNLAYTTTARRIHHPFRVTAVGANLQSLRDSLHGALHRETYTPVPSTAPGIGFVFTGQGAQYSGMGKELYRSCFQFRTTIEHFDCIARSQGLPSILPLVDGSVAVEELSPVVVQVGTTCVQMALVNYWTALGVKPAFIIGHSLGDYAALNTAGVLSTSDTIYLCGRRAQLLTKECKIGTHSMLAIKASLAEVKHFLRDELHEVSCVNAPAETVVSGLVADIDELAQKCSTEGLKSTKLKVPYAFHSSQVDPILEAFEDIAQGVTFHKPTTPFVSALFGEVITDANWECLGPKYLRDHCRKTVNFLGGVEATRHAKLTNDKTLWVEIGSHTICSGMIKATLGPQVTTVASLRREEDTWKVLSNSLASLHLAGIDINWKQYHQDFSSSLQVLRLPAYKWDLKNYWIPYTNNFCLSKGAPVATVAAGPQHEYLTTAAQKVIETRSDGATATVVIENDIADPELNRVIQGHKVNGTALCPSSLYADISQTLAEYLIKKYKPEYDGLGLDVCEVTVPRPLIAKGGQQLFRVSATADWAEKKTTLQIYSVTAEGKKTADHATCTVRFFDCAAAEAEWKRVSYLVKRSIDRLHDIAENGDAHRLGRGMVYKLFAALVDYDDNFKSIREVILDSEQHEATARVKFQAPQGNFHRNPFWIDSFGHLSGFIMNASDATDSKNQVFVNHGWDSMRCLKKFSPDVTYRTYVRMQPWKDSIWAGDVYVFDGDDIVAVYGAVKFQALSRKILDTVLPPSRASAPAPAKPAAKPSAPSLVKRALTILAEEVGLSESEITDDLVFADYGVDSLLSLTVTGRYREELDIDLESSIFIDQPTVKDFKQFLAPMSQGEASDGSTSDPESSSSFNGGSSTDESSAGSPVSSPPNEKVTQVEQHATIKEIRAILADEIGVTEEELKDDENLGEMGMDSLLSLTVLGRIRETLDLDLPGEFFIENQTLNDVEDALGLKPKAAPAPAPAPAPVPAPVSAPILKEPVPNANSTIMARASPHPRSTSILLQGNPKTATKTLFLFPDGSGSATSYATIPGVSPDVCVYGLNCPYMKTPEKLKYPLAEMTFPYLAEIRRRQPKGPYNFGGWSAGGICAYDAARYLILEEGEQVDRLLLLDSPFPIGLEKLPTRLYGFINSMGLFGEGNKAPPAWLLPHFLAFIDSLDTYKAVPLPFDDPKWAKKMPKTFMVWAKDGICSKPDDPWPEPDPDGKPDTREMVWLLKNRTDMGPNKWDTLVGPQNVGGITVIEGANHFTMTLGPKAKELGSFIGNAMAN</sequence>
<reference key="1">
    <citation type="journal article" date="2011" name="Genome Res.">
        <title>Comparative genomics of citric-acid-producing Aspergillus niger ATCC 1015 versus enzyme-producing CBS 513.88.</title>
        <authorList>
            <person name="Andersen M.R."/>
            <person name="Salazar M.P."/>
            <person name="Schaap P.J."/>
            <person name="van de Vondervoort P.J.I."/>
            <person name="Culley D."/>
            <person name="Thykaer J."/>
            <person name="Frisvad J.C."/>
            <person name="Nielsen K.F."/>
            <person name="Albang R."/>
            <person name="Albermann K."/>
            <person name="Berka R.M."/>
            <person name="Braus G.H."/>
            <person name="Braus-Stromeyer S.A."/>
            <person name="Corrochano L.M."/>
            <person name="Dai Z."/>
            <person name="van Dijck P.W.M."/>
            <person name="Hofmann G."/>
            <person name="Lasure L.L."/>
            <person name="Magnuson J.K."/>
            <person name="Menke H."/>
            <person name="Meijer M."/>
            <person name="Meijer S.L."/>
            <person name="Nielsen J.B."/>
            <person name="Nielsen M.L."/>
            <person name="van Ooyen A.J.J."/>
            <person name="Pel H.J."/>
            <person name="Poulsen L."/>
            <person name="Samson R.A."/>
            <person name="Stam H."/>
            <person name="Tsang A."/>
            <person name="van den Brink J.M."/>
            <person name="Atkins A."/>
            <person name="Aerts A."/>
            <person name="Shapiro H."/>
            <person name="Pangilinan J."/>
            <person name="Salamov A."/>
            <person name="Lou Y."/>
            <person name="Lindquist E."/>
            <person name="Lucas S."/>
            <person name="Grimwood J."/>
            <person name="Grigoriev I.V."/>
            <person name="Kubicek C.P."/>
            <person name="Martinez D."/>
            <person name="van Peij N.N.M.E."/>
            <person name="Roubos J.A."/>
            <person name="Nielsen J."/>
            <person name="Baker S.E."/>
        </authorList>
    </citation>
    <scope>NUCLEOTIDE SEQUENCE [LARGE SCALE GENOMIC DNA]</scope>
    <source>
        <strain>ATCC 1015 / CBS 113.46 / FGSC A1144 / LSHB Ac4 / NCTC 3858a / NRRL 328 / USDA 3528.7</strain>
    </source>
</reference>
<reference key="2">
    <citation type="journal article" date="2019" name="Biochemistry">
        <title>Biaryl-forming enzymes from Aspergilli exhibit substrate-dependent stereoselectivity.</title>
        <authorList>
            <person name="Obermaier S."/>
            <person name="Mueller M."/>
        </authorList>
    </citation>
    <scope>FUNCTION</scope>
    <scope>PATHWAY</scope>
</reference>
<keyword id="KW-0511">Multifunctional enzyme</keyword>
<keyword id="KW-0596">Phosphopantetheine</keyword>
<keyword id="KW-0597">Phosphoprotein</keyword>
<keyword id="KW-0677">Repeat</keyword>
<keyword id="KW-0808">Transferase</keyword>
<accession>G3XLL5</accession>
<protein>
    <recommendedName>
        <fullName evidence="10">Non-reducing polyketide synthase albA</fullName>
        <shortName evidence="10">NR-PKS albA</shortName>
        <ecNumber evidence="11">2.3.1.-</ecNumber>
    </recommendedName>
</protein>